<gene>
    <name evidence="1" type="primary">iscS</name>
    <name type="synonym">nifS</name>
    <name type="ordered locus">BUsg_577</name>
</gene>
<evidence type="ECO:0000255" key="1">
    <source>
        <dbReference type="HAMAP-Rule" id="MF_00331"/>
    </source>
</evidence>
<organism>
    <name type="scientific">Buchnera aphidicola subsp. Schizaphis graminum (strain Sg)</name>
    <dbReference type="NCBI Taxonomy" id="198804"/>
    <lineage>
        <taxon>Bacteria</taxon>
        <taxon>Pseudomonadati</taxon>
        <taxon>Pseudomonadota</taxon>
        <taxon>Gammaproteobacteria</taxon>
        <taxon>Enterobacterales</taxon>
        <taxon>Erwiniaceae</taxon>
        <taxon>Buchnera</taxon>
    </lineage>
</organism>
<name>ISCS_BUCAP</name>
<protein>
    <recommendedName>
        <fullName evidence="1">Cysteine desulfurase IscS</fullName>
        <ecNumber evidence="1">2.8.1.7</ecNumber>
    </recommendedName>
</protein>
<comment type="function">
    <text evidence="1">Master enzyme that delivers sulfur to a number of partners involved in Fe-S cluster assembly, tRNA modification or cofactor biosynthesis. Catalyzes the removal of elemental sulfur atoms from cysteine to produce alanine. Functions as a sulfur delivery protein for Fe-S cluster synthesis onto IscU, an Fe-S scaffold assembly protein, as well as other S acceptor proteins.</text>
</comment>
<comment type="catalytic activity">
    <reaction evidence="1">
        <text>(sulfur carrier)-H + L-cysteine = (sulfur carrier)-SH + L-alanine</text>
        <dbReference type="Rhea" id="RHEA:43892"/>
        <dbReference type="Rhea" id="RHEA-COMP:14737"/>
        <dbReference type="Rhea" id="RHEA-COMP:14739"/>
        <dbReference type="ChEBI" id="CHEBI:29917"/>
        <dbReference type="ChEBI" id="CHEBI:35235"/>
        <dbReference type="ChEBI" id="CHEBI:57972"/>
        <dbReference type="ChEBI" id="CHEBI:64428"/>
        <dbReference type="EC" id="2.8.1.7"/>
    </reaction>
</comment>
<comment type="cofactor">
    <cofactor evidence="1">
        <name>pyridoxal 5'-phosphate</name>
        <dbReference type="ChEBI" id="CHEBI:597326"/>
    </cofactor>
</comment>
<comment type="pathway">
    <text evidence="1">Cofactor biosynthesis; iron-sulfur cluster biosynthesis.</text>
</comment>
<comment type="subunit">
    <text evidence="1">Homodimer. Forms a heterotetramer with IscU, interacts with other sulfur acceptors.</text>
</comment>
<comment type="subcellular location">
    <subcellularLocation>
        <location evidence="1">Cytoplasm</location>
    </subcellularLocation>
</comment>
<comment type="similarity">
    <text evidence="1">Belongs to the class-V pyridoxal-phosphate-dependent aminotransferase family. NifS/IscS subfamily.</text>
</comment>
<accession>O51886</accession>
<keyword id="KW-0001">2Fe-2S</keyword>
<keyword id="KW-0963">Cytoplasm</keyword>
<keyword id="KW-0408">Iron</keyword>
<keyword id="KW-0411">Iron-sulfur</keyword>
<keyword id="KW-0479">Metal-binding</keyword>
<keyword id="KW-0663">Pyridoxal phosphate</keyword>
<keyword id="KW-0808">Transferase</keyword>
<sequence length="404" mass="45144">MKNPIYLDYAATTPVEFKVAKKMMNYLTIDGIFGNPASRSHKFGWEAEEVIDIARNEISELIGSDSREIVFTSGATEANNLAIKGIAFFHRKKGNHIITSKTEHKSVLDACRYLESVGFSVTYLTPKNNGIIDLNDLKKNINKNTILVSIMHVNNETGIIQDITNISKICRSHDIFFHVDATQSVGKIAINLKNLFVDLMSFSAHKIYGPKGIGGLYVRRKPRVRLSALSHGGGHERGMRAGTLPVHQIVGMGESFKLARKKINDDFIHLTNLRNDLWNGIKNIEEVYLNSDLKQGAPHILNVSFNYIEGESLIMALKDLAISSGSACTSSSLEPSYVLRALGIKDELAHSSIRFSIGRFTTKEEIQHTVKSVHKSIHRLRALSPLWEMFKSGVDLNSIEWDHT</sequence>
<proteinExistence type="inferred from homology"/>
<reference key="1">
    <citation type="journal article" date="1998" name="Curr. Microbiol.">
        <title>Sequence analysis of a 34.7-kb DNA segment from the genome of Buchnera aphidicola (endosymbiont of aphids) containing groEL, dnaA, the atp operon, gidA, and rho.</title>
        <authorList>
            <person name="Clark M.A."/>
            <person name="Baumann L."/>
            <person name="Baumann P."/>
        </authorList>
    </citation>
    <scope>NUCLEOTIDE SEQUENCE [GENOMIC DNA]</scope>
</reference>
<reference key="2">
    <citation type="journal article" date="2002" name="Science">
        <title>50 million years of genomic stasis in endosymbiotic bacteria.</title>
        <authorList>
            <person name="Tamas I."/>
            <person name="Klasson L."/>
            <person name="Canbaeck B."/>
            <person name="Naeslund A.K."/>
            <person name="Eriksson A.-S."/>
            <person name="Wernegreen J.J."/>
            <person name="Sandstroem J.P."/>
            <person name="Moran N.A."/>
            <person name="Andersson S.G.E."/>
        </authorList>
    </citation>
    <scope>NUCLEOTIDE SEQUENCE [LARGE SCALE GENOMIC DNA]</scope>
    <source>
        <strain>Sg</strain>
    </source>
</reference>
<feature type="chain" id="PRO_0000150262" description="Cysteine desulfurase IscS">
    <location>
        <begin position="1"/>
        <end position="404"/>
    </location>
</feature>
<feature type="active site" description="Cysteine persulfide intermediate" evidence="1">
    <location>
        <position position="328"/>
    </location>
</feature>
<feature type="binding site" evidence="1">
    <location>
        <begin position="75"/>
        <end position="76"/>
    </location>
    <ligand>
        <name>pyridoxal 5'-phosphate</name>
        <dbReference type="ChEBI" id="CHEBI:597326"/>
    </ligand>
</feature>
<feature type="binding site" evidence="1">
    <location>
        <position position="155"/>
    </location>
    <ligand>
        <name>pyridoxal 5'-phosphate</name>
        <dbReference type="ChEBI" id="CHEBI:597326"/>
    </ligand>
</feature>
<feature type="binding site" evidence="1">
    <location>
        <position position="183"/>
    </location>
    <ligand>
        <name>pyridoxal 5'-phosphate</name>
        <dbReference type="ChEBI" id="CHEBI:597326"/>
    </ligand>
</feature>
<feature type="binding site" evidence="1">
    <location>
        <begin position="203"/>
        <end position="205"/>
    </location>
    <ligand>
        <name>pyridoxal 5'-phosphate</name>
        <dbReference type="ChEBI" id="CHEBI:597326"/>
    </ligand>
</feature>
<feature type="binding site" evidence="1">
    <location>
        <position position="243"/>
    </location>
    <ligand>
        <name>pyridoxal 5'-phosphate</name>
        <dbReference type="ChEBI" id="CHEBI:597326"/>
    </ligand>
</feature>
<feature type="binding site" description="via persulfide group" evidence="1">
    <location>
        <position position="328"/>
    </location>
    <ligand>
        <name>[2Fe-2S] cluster</name>
        <dbReference type="ChEBI" id="CHEBI:190135"/>
        <note>ligand shared with IscU</note>
    </ligand>
</feature>
<feature type="modified residue" description="N6-(pyridoxal phosphate)lysine" evidence="1">
    <location>
        <position position="206"/>
    </location>
</feature>
<dbReference type="EC" id="2.8.1.7" evidence="1"/>
<dbReference type="EMBL" id="AF008210">
    <property type="protein sequence ID" value="AAC38124.1"/>
    <property type="molecule type" value="Genomic_DNA"/>
</dbReference>
<dbReference type="EMBL" id="AE013218">
    <property type="protein sequence ID" value="AAM68111.1"/>
    <property type="molecule type" value="Genomic_DNA"/>
</dbReference>
<dbReference type="RefSeq" id="WP_011054077.1">
    <property type="nucleotide sequence ID" value="NC_004061.1"/>
</dbReference>
<dbReference type="SMR" id="O51886"/>
<dbReference type="STRING" id="198804.BUsg_577"/>
<dbReference type="GeneID" id="93004059"/>
<dbReference type="KEGG" id="bas:BUsg_577"/>
<dbReference type="eggNOG" id="COG1104">
    <property type="taxonomic scope" value="Bacteria"/>
</dbReference>
<dbReference type="HOGENOM" id="CLU_003433_0_2_6"/>
<dbReference type="UniPathway" id="UPA00266"/>
<dbReference type="Proteomes" id="UP000000416">
    <property type="component" value="Chromosome"/>
</dbReference>
<dbReference type="GO" id="GO:1990221">
    <property type="term" value="C:L-cysteine desulfurase complex"/>
    <property type="evidence" value="ECO:0007669"/>
    <property type="project" value="UniProtKB-ARBA"/>
</dbReference>
<dbReference type="GO" id="GO:0051537">
    <property type="term" value="F:2 iron, 2 sulfur cluster binding"/>
    <property type="evidence" value="ECO:0007669"/>
    <property type="project" value="UniProtKB-UniRule"/>
</dbReference>
<dbReference type="GO" id="GO:0031071">
    <property type="term" value="F:cysteine desulfurase activity"/>
    <property type="evidence" value="ECO:0007669"/>
    <property type="project" value="UniProtKB-UniRule"/>
</dbReference>
<dbReference type="GO" id="GO:0046872">
    <property type="term" value="F:metal ion binding"/>
    <property type="evidence" value="ECO:0007669"/>
    <property type="project" value="UniProtKB-KW"/>
</dbReference>
<dbReference type="GO" id="GO:0030170">
    <property type="term" value="F:pyridoxal phosphate binding"/>
    <property type="evidence" value="ECO:0007669"/>
    <property type="project" value="UniProtKB-UniRule"/>
</dbReference>
<dbReference type="GO" id="GO:0044571">
    <property type="term" value="P:[2Fe-2S] cluster assembly"/>
    <property type="evidence" value="ECO:0007669"/>
    <property type="project" value="UniProtKB-UniRule"/>
</dbReference>
<dbReference type="FunFam" id="3.40.640.10:FF:000003">
    <property type="entry name" value="Cysteine desulfurase IscS"/>
    <property type="match status" value="1"/>
</dbReference>
<dbReference type="FunFam" id="3.90.1150.10:FF:000002">
    <property type="entry name" value="Cysteine desulfurase IscS"/>
    <property type="match status" value="1"/>
</dbReference>
<dbReference type="Gene3D" id="3.90.1150.10">
    <property type="entry name" value="Aspartate Aminotransferase, domain 1"/>
    <property type="match status" value="1"/>
</dbReference>
<dbReference type="Gene3D" id="3.40.640.10">
    <property type="entry name" value="Type I PLP-dependent aspartate aminotransferase-like (Major domain)"/>
    <property type="match status" value="1"/>
</dbReference>
<dbReference type="HAMAP" id="MF_00331">
    <property type="entry name" value="Cys_desulf_IscS"/>
    <property type="match status" value="1"/>
</dbReference>
<dbReference type="InterPro" id="IPR000192">
    <property type="entry name" value="Aminotrans_V_dom"/>
</dbReference>
<dbReference type="InterPro" id="IPR020578">
    <property type="entry name" value="Aminotrans_V_PyrdxlP_BS"/>
</dbReference>
<dbReference type="InterPro" id="IPR010240">
    <property type="entry name" value="Cys_deSase_IscS"/>
</dbReference>
<dbReference type="InterPro" id="IPR016454">
    <property type="entry name" value="Cysteine_dSase"/>
</dbReference>
<dbReference type="InterPro" id="IPR015424">
    <property type="entry name" value="PyrdxlP-dep_Trfase"/>
</dbReference>
<dbReference type="InterPro" id="IPR015421">
    <property type="entry name" value="PyrdxlP-dep_Trfase_major"/>
</dbReference>
<dbReference type="InterPro" id="IPR015422">
    <property type="entry name" value="PyrdxlP-dep_Trfase_small"/>
</dbReference>
<dbReference type="NCBIfam" id="TIGR02006">
    <property type="entry name" value="IscS"/>
    <property type="match status" value="1"/>
</dbReference>
<dbReference type="NCBIfam" id="NF002806">
    <property type="entry name" value="PRK02948.1"/>
    <property type="match status" value="1"/>
</dbReference>
<dbReference type="NCBIfam" id="NF010611">
    <property type="entry name" value="PRK14012.1"/>
    <property type="match status" value="1"/>
</dbReference>
<dbReference type="PANTHER" id="PTHR11601:SF34">
    <property type="entry name" value="CYSTEINE DESULFURASE"/>
    <property type="match status" value="1"/>
</dbReference>
<dbReference type="PANTHER" id="PTHR11601">
    <property type="entry name" value="CYSTEINE DESULFURYLASE FAMILY MEMBER"/>
    <property type="match status" value="1"/>
</dbReference>
<dbReference type="Pfam" id="PF00266">
    <property type="entry name" value="Aminotran_5"/>
    <property type="match status" value="1"/>
</dbReference>
<dbReference type="PIRSF" id="PIRSF005572">
    <property type="entry name" value="NifS"/>
    <property type="match status" value="1"/>
</dbReference>
<dbReference type="SUPFAM" id="SSF53383">
    <property type="entry name" value="PLP-dependent transferases"/>
    <property type="match status" value="1"/>
</dbReference>
<dbReference type="PROSITE" id="PS00595">
    <property type="entry name" value="AA_TRANSFER_CLASS_5"/>
    <property type="match status" value="1"/>
</dbReference>